<gene>
    <name evidence="5" type="primary">ALT4</name>
    <name evidence="7" type="ordered locus">At1g68280</name>
    <name evidence="8" type="ORF">T22E19.9</name>
</gene>
<proteinExistence type="evidence at transcript level"/>
<reference key="1">
    <citation type="journal article" date="2000" name="Nature">
        <title>Sequence and analysis of chromosome 1 of the plant Arabidopsis thaliana.</title>
        <authorList>
            <person name="Theologis A."/>
            <person name="Ecker J.R."/>
            <person name="Palm C.J."/>
            <person name="Federspiel N.A."/>
            <person name="Kaul S."/>
            <person name="White O."/>
            <person name="Alonso J."/>
            <person name="Altafi H."/>
            <person name="Araujo R."/>
            <person name="Bowman C.L."/>
            <person name="Brooks S.Y."/>
            <person name="Buehler E."/>
            <person name="Chan A."/>
            <person name="Chao Q."/>
            <person name="Chen H."/>
            <person name="Cheuk R.F."/>
            <person name="Chin C.W."/>
            <person name="Chung M.K."/>
            <person name="Conn L."/>
            <person name="Conway A.B."/>
            <person name="Conway A.R."/>
            <person name="Creasy T.H."/>
            <person name="Dewar K."/>
            <person name="Dunn P."/>
            <person name="Etgu P."/>
            <person name="Feldblyum T.V."/>
            <person name="Feng J.-D."/>
            <person name="Fong B."/>
            <person name="Fujii C.Y."/>
            <person name="Gill J.E."/>
            <person name="Goldsmith A.D."/>
            <person name="Haas B."/>
            <person name="Hansen N.F."/>
            <person name="Hughes B."/>
            <person name="Huizar L."/>
            <person name="Hunter J.L."/>
            <person name="Jenkins J."/>
            <person name="Johnson-Hopson C."/>
            <person name="Khan S."/>
            <person name="Khaykin E."/>
            <person name="Kim C.J."/>
            <person name="Koo H.L."/>
            <person name="Kremenetskaia I."/>
            <person name="Kurtz D.B."/>
            <person name="Kwan A."/>
            <person name="Lam B."/>
            <person name="Langin-Hooper S."/>
            <person name="Lee A."/>
            <person name="Lee J.M."/>
            <person name="Lenz C.A."/>
            <person name="Li J.H."/>
            <person name="Li Y.-P."/>
            <person name="Lin X."/>
            <person name="Liu S.X."/>
            <person name="Liu Z.A."/>
            <person name="Luros J.S."/>
            <person name="Maiti R."/>
            <person name="Marziali A."/>
            <person name="Militscher J."/>
            <person name="Miranda M."/>
            <person name="Nguyen M."/>
            <person name="Nierman W.C."/>
            <person name="Osborne B.I."/>
            <person name="Pai G."/>
            <person name="Peterson J."/>
            <person name="Pham P.K."/>
            <person name="Rizzo M."/>
            <person name="Rooney T."/>
            <person name="Rowley D."/>
            <person name="Sakano H."/>
            <person name="Salzberg S.L."/>
            <person name="Schwartz J.R."/>
            <person name="Shinn P."/>
            <person name="Southwick A.M."/>
            <person name="Sun H."/>
            <person name="Tallon L.J."/>
            <person name="Tambunga G."/>
            <person name="Toriumi M.J."/>
            <person name="Town C.D."/>
            <person name="Utterback T."/>
            <person name="Van Aken S."/>
            <person name="Vaysberg M."/>
            <person name="Vysotskaia V.S."/>
            <person name="Walker M."/>
            <person name="Wu D."/>
            <person name="Yu G."/>
            <person name="Fraser C.M."/>
            <person name="Venter J.C."/>
            <person name="Davis R.W."/>
        </authorList>
    </citation>
    <scope>NUCLEOTIDE SEQUENCE [LARGE SCALE GENOMIC DNA]</scope>
    <source>
        <strain>cv. Columbia</strain>
    </source>
</reference>
<reference key="2">
    <citation type="journal article" date="2017" name="Plant J.">
        <title>Araport11: a complete reannotation of the Arabidopsis thaliana reference genome.</title>
        <authorList>
            <person name="Cheng C.Y."/>
            <person name="Krishnakumar V."/>
            <person name="Chan A.P."/>
            <person name="Thibaud-Nissen F."/>
            <person name="Schobel S."/>
            <person name="Town C.D."/>
        </authorList>
    </citation>
    <scope>GENOME REANNOTATION</scope>
    <source>
        <strain>cv. Columbia</strain>
    </source>
</reference>
<reference key="3">
    <citation type="journal article" date="2014" name="Plant Mol. Biol.">
        <title>Acyl-lipid thioesterase1-4 from Arabidopsis thaliana form a novel family of fatty acyl-acyl carrier protein thioesterases with divergent expression patterns and substrate specificities.</title>
        <authorList>
            <person name="Pulsifer I.P."/>
            <person name="Lowe C."/>
            <person name="Narayaran S.A."/>
            <person name="Busuttil A.S."/>
            <person name="Vishwanath S.J."/>
            <person name="Domergue F."/>
            <person name="Rowland O."/>
        </authorList>
    </citation>
    <scope>FUNCTION</scope>
    <scope>SUBCELLULAR LOCATION</scope>
    <scope>TISSUE SPECIFICITY</scope>
</reference>
<dbReference type="EC" id="3.1.2.-" evidence="6"/>
<dbReference type="EMBL" id="AC016447">
    <property type="protein sequence ID" value="AAG52600.1"/>
    <property type="status" value="ALT_SEQ"/>
    <property type="molecule type" value="Genomic_DNA"/>
</dbReference>
<dbReference type="EMBL" id="CP002684">
    <property type="status" value="NOT_ANNOTATED_CDS"/>
    <property type="molecule type" value="Genomic_DNA"/>
</dbReference>
<dbReference type="PIR" id="D96706">
    <property type="entry name" value="D96706"/>
</dbReference>
<dbReference type="SMR" id="F4HX80"/>
<dbReference type="FunCoup" id="F4HX80">
    <property type="interactions" value="4"/>
</dbReference>
<dbReference type="STRING" id="3702.F4HX80"/>
<dbReference type="PaxDb" id="3702-AT1G68280.1"/>
<dbReference type="Araport" id="AT1G68280"/>
<dbReference type="TAIR" id="AT1G68280">
    <property type="gene designation" value="ALT4"/>
</dbReference>
<dbReference type="eggNOG" id="ENOG502RYRP">
    <property type="taxonomic scope" value="Eukaryota"/>
</dbReference>
<dbReference type="HOGENOM" id="CLU_101141_1_2_1"/>
<dbReference type="InParanoid" id="F4HX80"/>
<dbReference type="BioCyc" id="ARA:AT1G68280-MONOMER"/>
<dbReference type="PRO" id="PR:F4HX80"/>
<dbReference type="Proteomes" id="UP000006548">
    <property type="component" value="Chromosome 1"/>
</dbReference>
<dbReference type="ExpressionAtlas" id="F4HX80">
    <property type="expression patterns" value="baseline"/>
</dbReference>
<dbReference type="GO" id="GO:0009507">
    <property type="term" value="C:chloroplast"/>
    <property type="evidence" value="ECO:0000314"/>
    <property type="project" value="UniProtKB"/>
</dbReference>
<dbReference type="GO" id="GO:0016297">
    <property type="term" value="F:fatty acyl-[ACP] hydrolase activity"/>
    <property type="evidence" value="ECO:0000314"/>
    <property type="project" value="UniProtKB"/>
</dbReference>
<dbReference type="GO" id="GO:0006629">
    <property type="term" value="P:lipid metabolic process"/>
    <property type="evidence" value="ECO:0007669"/>
    <property type="project" value="UniProtKB-KW"/>
</dbReference>
<dbReference type="CDD" id="cd00586">
    <property type="entry name" value="4HBT"/>
    <property type="match status" value="1"/>
</dbReference>
<dbReference type="FunFam" id="3.10.129.10:FF:000037">
    <property type="entry name" value="acyl-acyl carrier protein thioesterase ATL3, chloroplastic"/>
    <property type="match status" value="1"/>
</dbReference>
<dbReference type="Gene3D" id="3.10.129.10">
    <property type="entry name" value="Hotdog Thioesterase"/>
    <property type="match status" value="1"/>
</dbReference>
<dbReference type="InterPro" id="IPR050563">
    <property type="entry name" value="4-hydroxybenzoyl-CoA_TE"/>
</dbReference>
<dbReference type="InterPro" id="IPR029069">
    <property type="entry name" value="HotDog_dom_sf"/>
</dbReference>
<dbReference type="PANTHER" id="PTHR31793">
    <property type="entry name" value="4-HYDROXYBENZOYL-COA THIOESTERASE FAMILY MEMBER"/>
    <property type="match status" value="1"/>
</dbReference>
<dbReference type="PANTHER" id="PTHR31793:SF27">
    <property type="entry name" value="NOVEL THIOESTERASE SUPERFAMILY DOMAIN AND SAPOSIN A-TYPE DOMAIN CONTAINING PROTEIN (0610012H03RIK)"/>
    <property type="match status" value="1"/>
</dbReference>
<dbReference type="Pfam" id="PF13279">
    <property type="entry name" value="4HBT_2"/>
    <property type="match status" value="1"/>
</dbReference>
<dbReference type="SUPFAM" id="SSF54637">
    <property type="entry name" value="Thioesterase/thiol ester dehydrase-isomerase"/>
    <property type="match status" value="1"/>
</dbReference>
<comment type="function">
    <text evidence="4">Acyl-ACP thioesterase involved in the production of fatty acids and beta-keto fatty acids. Can produce fatty acids of medium to long chain (6:0, 8:0, 10:0 and 16:1) and small amounts of medium to long chain beta-keto fatty acids (8:0, 14:0 and 16:1) when expressed in a heterologous organism (E.coli). Possesses thioesterase activity for lauroyl-ACP (12:0-ACP) in vitro. May play a role in the development of floral organs by generating short chain fatty acids.</text>
</comment>
<comment type="subcellular location">
    <subcellularLocation>
        <location evidence="4">Plastid</location>
        <location evidence="4">Chloroplast</location>
    </subcellularLocation>
</comment>
<comment type="tissue specificity">
    <text evidence="4">Expressed specifically in anther walls (endothecium) and in microspores.</text>
</comment>
<comment type="similarity">
    <text evidence="6">Belongs to the 4-hydroxybenzoyl-CoA thioesterase family.</text>
</comment>
<comment type="sequence caution" evidence="6">
    <conflict type="erroneous gene model prediction">
        <sequence resource="EMBL-CDS" id="AAG52600"/>
    </conflict>
</comment>
<protein>
    <recommendedName>
        <fullName evidence="6">Acyl-acyl carrier protein thioesterase ATL4, chloroplastic</fullName>
        <ecNumber evidence="6">3.1.2.-</ecNumber>
    </recommendedName>
    <alternativeName>
        <fullName evidence="6">Acyl-ACP thioesterase ATL4</fullName>
    </alternativeName>
    <alternativeName>
        <fullName evidence="5">Acyl-lipid thioesterase 4</fullName>
    </alternativeName>
</protein>
<organism>
    <name type="scientific">Arabidopsis thaliana</name>
    <name type="common">Mouse-ear cress</name>
    <dbReference type="NCBI Taxonomy" id="3702"/>
    <lineage>
        <taxon>Eukaryota</taxon>
        <taxon>Viridiplantae</taxon>
        <taxon>Streptophyta</taxon>
        <taxon>Embryophyta</taxon>
        <taxon>Tracheophyta</taxon>
        <taxon>Spermatophyta</taxon>
        <taxon>Magnoliopsida</taxon>
        <taxon>eudicotyledons</taxon>
        <taxon>Gunneridae</taxon>
        <taxon>Pentapetalae</taxon>
        <taxon>rosids</taxon>
        <taxon>malvids</taxon>
        <taxon>Brassicales</taxon>
        <taxon>Brassicaceae</taxon>
        <taxon>Camelineae</taxon>
        <taxon>Arabidopsis</taxon>
    </lineage>
</organism>
<accession>F4HX80</accession>
<accession>Q9C9G3</accession>
<feature type="transit peptide" description="Chloroplast" evidence="3">
    <location>
        <begin position="1"/>
        <end position="47"/>
    </location>
</feature>
<feature type="chain" id="PRO_0000435264" description="Acyl-acyl carrier protein thioesterase ATL4, chloroplastic">
    <location>
        <begin position="48"/>
        <end position="188"/>
    </location>
</feature>
<feature type="active site" evidence="1 2">
    <location>
        <position position="64"/>
    </location>
</feature>
<evidence type="ECO:0000250" key="1">
    <source>
        <dbReference type="UniProtKB" id="P56653"/>
    </source>
</evidence>
<evidence type="ECO:0000250" key="2">
    <source>
        <dbReference type="UniProtKB" id="Q9C7I5"/>
    </source>
</evidence>
<evidence type="ECO:0000255" key="3"/>
<evidence type="ECO:0000269" key="4">
    <source>
    </source>
</evidence>
<evidence type="ECO:0000303" key="5">
    <source>
    </source>
</evidence>
<evidence type="ECO:0000305" key="6"/>
<evidence type="ECO:0000312" key="7">
    <source>
        <dbReference type="Araport" id="AT1G68280"/>
    </source>
</evidence>
<evidence type="ECO:0000312" key="8">
    <source>
        <dbReference type="EMBL" id="AAG52600.1"/>
    </source>
</evidence>
<sequence length="188" mass="21318">MIRVTGTAAPAMSVVFPTSWRQPVMLPLRSAKTFKPHTFLDLKGGKEMSEFHEVELKVRDYELDQFGVVNNAVYANYCQHGMHEFLESIGINCDEVARSGEALAISELTMNFLAPLRSGDKFVVKVNISRTSAARIYFDHSILKLPNQEVILEAKATVVWLDNKHRPVRIPSSIRSKFVHFLRQNDTV</sequence>
<name>ALT4_ARATH</name>
<keyword id="KW-0150">Chloroplast</keyword>
<keyword id="KW-0378">Hydrolase</keyword>
<keyword id="KW-0443">Lipid metabolism</keyword>
<keyword id="KW-0934">Plastid</keyword>
<keyword id="KW-1185">Reference proteome</keyword>
<keyword id="KW-0809">Transit peptide</keyword>